<proteinExistence type="inferred from homology"/>
<accession>B5XZB2</accession>
<name>GPMA_KLEP3</name>
<keyword id="KW-0312">Gluconeogenesis</keyword>
<keyword id="KW-0324">Glycolysis</keyword>
<keyword id="KW-0413">Isomerase</keyword>
<comment type="function">
    <text evidence="1">Catalyzes the interconversion of 2-phosphoglycerate and 3-phosphoglycerate.</text>
</comment>
<comment type="catalytic activity">
    <reaction evidence="1">
        <text>(2R)-2-phosphoglycerate = (2R)-3-phosphoglycerate</text>
        <dbReference type="Rhea" id="RHEA:15901"/>
        <dbReference type="ChEBI" id="CHEBI:58272"/>
        <dbReference type="ChEBI" id="CHEBI:58289"/>
        <dbReference type="EC" id="5.4.2.11"/>
    </reaction>
</comment>
<comment type="pathway">
    <text evidence="1">Carbohydrate degradation; glycolysis; pyruvate from D-glyceraldehyde 3-phosphate: step 3/5.</text>
</comment>
<comment type="subunit">
    <text evidence="1">Homodimer.</text>
</comment>
<comment type="similarity">
    <text evidence="1">Belongs to the phosphoglycerate mutase family. BPG-dependent PGAM subfamily.</text>
</comment>
<gene>
    <name evidence="1" type="primary">gpmA</name>
    <name type="ordered locus">KPK_3810</name>
</gene>
<evidence type="ECO:0000255" key="1">
    <source>
        <dbReference type="HAMAP-Rule" id="MF_01039"/>
    </source>
</evidence>
<feature type="chain" id="PRO_1000135956" description="2,3-bisphosphoglycerate-dependent phosphoglycerate mutase">
    <location>
        <begin position="1"/>
        <end position="250"/>
    </location>
</feature>
<feature type="active site" description="Tele-phosphohistidine intermediate" evidence="1">
    <location>
        <position position="11"/>
    </location>
</feature>
<feature type="active site" description="Proton donor/acceptor" evidence="1">
    <location>
        <position position="89"/>
    </location>
</feature>
<feature type="binding site" evidence="1">
    <location>
        <begin position="10"/>
        <end position="17"/>
    </location>
    <ligand>
        <name>substrate</name>
    </ligand>
</feature>
<feature type="binding site" evidence="1">
    <location>
        <begin position="23"/>
        <end position="24"/>
    </location>
    <ligand>
        <name>substrate</name>
    </ligand>
</feature>
<feature type="binding site" evidence="1">
    <location>
        <position position="62"/>
    </location>
    <ligand>
        <name>substrate</name>
    </ligand>
</feature>
<feature type="binding site" evidence="1">
    <location>
        <begin position="89"/>
        <end position="92"/>
    </location>
    <ligand>
        <name>substrate</name>
    </ligand>
</feature>
<feature type="binding site" evidence="1">
    <location>
        <position position="100"/>
    </location>
    <ligand>
        <name>substrate</name>
    </ligand>
</feature>
<feature type="binding site" evidence="1">
    <location>
        <begin position="116"/>
        <end position="117"/>
    </location>
    <ligand>
        <name>substrate</name>
    </ligand>
</feature>
<feature type="binding site" evidence="1">
    <location>
        <begin position="185"/>
        <end position="186"/>
    </location>
    <ligand>
        <name>substrate</name>
    </ligand>
</feature>
<feature type="site" description="Transition state stabilizer" evidence="1">
    <location>
        <position position="184"/>
    </location>
</feature>
<organism>
    <name type="scientific">Klebsiella pneumoniae (strain 342)</name>
    <dbReference type="NCBI Taxonomy" id="507522"/>
    <lineage>
        <taxon>Bacteria</taxon>
        <taxon>Pseudomonadati</taxon>
        <taxon>Pseudomonadota</taxon>
        <taxon>Gammaproteobacteria</taxon>
        <taxon>Enterobacterales</taxon>
        <taxon>Enterobacteriaceae</taxon>
        <taxon>Klebsiella/Raoultella group</taxon>
        <taxon>Klebsiella</taxon>
        <taxon>Klebsiella pneumoniae complex</taxon>
    </lineage>
</organism>
<reference key="1">
    <citation type="journal article" date="2008" name="PLoS Genet.">
        <title>Complete genome sequence of the N2-fixing broad host range endophyte Klebsiella pneumoniae 342 and virulence predictions verified in mice.</title>
        <authorList>
            <person name="Fouts D.E."/>
            <person name="Tyler H.L."/>
            <person name="DeBoy R.T."/>
            <person name="Daugherty S."/>
            <person name="Ren Q."/>
            <person name="Badger J.H."/>
            <person name="Durkin A.S."/>
            <person name="Huot H."/>
            <person name="Shrivastava S."/>
            <person name="Kothari S."/>
            <person name="Dodson R.J."/>
            <person name="Mohamoud Y."/>
            <person name="Khouri H."/>
            <person name="Roesch L.F.W."/>
            <person name="Krogfelt K.A."/>
            <person name="Struve C."/>
            <person name="Triplett E.W."/>
            <person name="Methe B.A."/>
        </authorList>
    </citation>
    <scope>NUCLEOTIDE SEQUENCE [LARGE SCALE GENOMIC DNA]</scope>
    <source>
        <strain>342</strain>
    </source>
</reference>
<dbReference type="EC" id="5.4.2.11" evidence="1"/>
<dbReference type="EMBL" id="CP000964">
    <property type="protein sequence ID" value="ACI08456.1"/>
    <property type="molecule type" value="Genomic_DNA"/>
</dbReference>
<dbReference type="SMR" id="B5XZB2"/>
<dbReference type="KEGG" id="kpe:KPK_3810"/>
<dbReference type="HOGENOM" id="CLU_033323_1_1_6"/>
<dbReference type="UniPathway" id="UPA00109">
    <property type="reaction ID" value="UER00186"/>
</dbReference>
<dbReference type="Proteomes" id="UP000001734">
    <property type="component" value="Chromosome"/>
</dbReference>
<dbReference type="GO" id="GO:0004619">
    <property type="term" value="F:phosphoglycerate mutase activity"/>
    <property type="evidence" value="ECO:0007669"/>
    <property type="project" value="UniProtKB-EC"/>
</dbReference>
<dbReference type="GO" id="GO:0006094">
    <property type="term" value="P:gluconeogenesis"/>
    <property type="evidence" value="ECO:0007669"/>
    <property type="project" value="UniProtKB-UniRule"/>
</dbReference>
<dbReference type="GO" id="GO:0006096">
    <property type="term" value="P:glycolytic process"/>
    <property type="evidence" value="ECO:0007669"/>
    <property type="project" value="UniProtKB-UniRule"/>
</dbReference>
<dbReference type="CDD" id="cd07067">
    <property type="entry name" value="HP_PGM_like"/>
    <property type="match status" value="1"/>
</dbReference>
<dbReference type="FunFam" id="3.40.50.1240:FF:000003">
    <property type="entry name" value="2,3-bisphosphoglycerate-dependent phosphoglycerate mutase"/>
    <property type="match status" value="1"/>
</dbReference>
<dbReference type="Gene3D" id="3.40.50.1240">
    <property type="entry name" value="Phosphoglycerate mutase-like"/>
    <property type="match status" value="1"/>
</dbReference>
<dbReference type="HAMAP" id="MF_01039">
    <property type="entry name" value="PGAM_GpmA"/>
    <property type="match status" value="1"/>
</dbReference>
<dbReference type="InterPro" id="IPR013078">
    <property type="entry name" value="His_Pase_superF_clade-1"/>
</dbReference>
<dbReference type="InterPro" id="IPR029033">
    <property type="entry name" value="His_PPase_superfam"/>
</dbReference>
<dbReference type="InterPro" id="IPR001345">
    <property type="entry name" value="PG/BPGM_mutase_AS"/>
</dbReference>
<dbReference type="InterPro" id="IPR005952">
    <property type="entry name" value="Phosphogly_mut1"/>
</dbReference>
<dbReference type="NCBIfam" id="TIGR01258">
    <property type="entry name" value="pgm_1"/>
    <property type="match status" value="1"/>
</dbReference>
<dbReference type="NCBIfam" id="NF010713">
    <property type="entry name" value="PRK14115.1"/>
    <property type="match status" value="1"/>
</dbReference>
<dbReference type="PANTHER" id="PTHR11931">
    <property type="entry name" value="PHOSPHOGLYCERATE MUTASE"/>
    <property type="match status" value="1"/>
</dbReference>
<dbReference type="Pfam" id="PF00300">
    <property type="entry name" value="His_Phos_1"/>
    <property type="match status" value="1"/>
</dbReference>
<dbReference type="PIRSF" id="PIRSF000709">
    <property type="entry name" value="6PFK_2-Ptase"/>
    <property type="match status" value="1"/>
</dbReference>
<dbReference type="SMART" id="SM00855">
    <property type="entry name" value="PGAM"/>
    <property type="match status" value="1"/>
</dbReference>
<dbReference type="SUPFAM" id="SSF53254">
    <property type="entry name" value="Phosphoglycerate mutase-like"/>
    <property type="match status" value="1"/>
</dbReference>
<dbReference type="PROSITE" id="PS00175">
    <property type="entry name" value="PG_MUTASE"/>
    <property type="match status" value="1"/>
</dbReference>
<sequence length="250" mass="28318">MAVTKLVLVRHGESQWNNENRFTGWYDVDLSEKGVSEAKAAGKLLKAEGFSFDFAYTSVLKRAIHTLWNVLDELDQAWLPVEKSWKLNERHYGALQGLNKAETAEKYGDEQVKQWRRGFAVTPPELTKDDERYPGHDPRYAKLTDAELPTTESLALTIDRVVPYWNETILPRLKSGERVIIAAHGNSLRALVKYLDNMGEDEILELNIPTGVPLVYEFDENFKPIKHYYLGNAEEIAAKAAAVANQGKAK</sequence>
<protein>
    <recommendedName>
        <fullName evidence="1">2,3-bisphosphoglycerate-dependent phosphoglycerate mutase</fullName>
        <shortName evidence="1">BPG-dependent PGAM</shortName>
        <shortName evidence="1">PGAM</shortName>
        <shortName evidence="1">Phosphoglyceromutase</shortName>
        <shortName evidence="1">dPGM</shortName>
        <ecNumber evidence="1">5.4.2.11</ecNumber>
    </recommendedName>
</protein>